<accession>P0C7S6</accession>
<sequence>QLWPRPQIPP</sequence>
<evidence type="ECO:0000269" key="1">
    <source>
    </source>
</evidence>
<evidence type="ECO:0000269" key="2">
    <source>
    </source>
</evidence>
<evidence type="ECO:0000305" key="3"/>
<feature type="peptide" id="PRO_0000343190" description="Bradykinin-potentiating peptide POL-236">
    <location>
        <begin position="1"/>
        <end position="10"/>
    </location>
</feature>
<feature type="modified residue" description="Pyrrolidone carboxylic acid" evidence="1 2">
    <location>
        <position position="1"/>
    </location>
</feature>
<dbReference type="GO" id="GO:0005576">
    <property type="term" value="C:extracellular region"/>
    <property type="evidence" value="ECO:0007669"/>
    <property type="project" value="UniProtKB-SubCell"/>
</dbReference>
<dbReference type="GO" id="GO:0030414">
    <property type="term" value="F:peptidase inhibitor activity"/>
    <property type="evidence" value="ECO:0007669"/>
    <property type="project" value="UniProtKB-KW"/>
</dbReference>
<dbReference type="GO" id="GO:0008217">
    <property type="term" value="P:regulation of blood pressure"/>
    <property type="evidence" value="ECO:0007669"/>
    <property type="project" value="UniProtKB-KW"/>
</dbReference>
<comment type="function">
    <text evidence="2">This peptide acts as a hypotensive peptides, but its action is not related to angiotensin-converting enzyme (ACE) inhibition.</text>
</comment>
<comment type="subcellular location">
    <subcellularLocation>
        <location>Secreted</location>
    </subcellularLocation>
</comment>
<comment type="tissue specificity">
    <text>Expressed by the venom gland.</text>
</comment>
<comment type="mass spectrometry">
    <text>Average mass.</text>
</comment>
<comment type="similarity">
    <text evidence="3">Belongs to the bradykinin-potentiating peptide family.</text>
</comment>
<proteinExistence type="evidence at protein level"/>
<name>BPP36_CROAT</name>
<keyword id="KW-0903">Direct protein sequencing</keyword>
<keyword id="KW-0382">Hypotensive agent</keyword>
<keyword id="KW-0481">Metalloenzyme inhibitor</keyword>
<keyword id="KW-0483">Metalloprotease inhibitor</keyword>
<keyword id="KW-0646">Protease inhibitor</keyword>
<keyword id="KW-0873">Pyrrolidone carboxylic acid</keyword>
<keyword id="KW-0964">Secreted</keyword>
<reference key="1">
    <citation type="journal article" date="1985" name="Peptides">
        <title>A new peptide from Crotalus atrox snake venom.</title>
        <authorList>
            <person name="Politi V."/>
            <person name="De Luca G."/>
            <person name="Di Stazio G."/>
            <person name="Schinina E."/>
            <person name="Bossa F."/>
        </authorList>
    </citation>
    <scope>PROTEIN SEQUENCE</scope>
    <scope>FUNCTION</scope>
    <scope>PYROGLUTAMATE FORMATION AT GLN-1</scope>
    <source>
        <tissue>Venom</tissue>
    </source>
</reference>
<reference key="2">
    <citation type="journal article" date="2009" name="J. Proteome Res.">
        <title>Exploring the venom proteome of the western diamondback rattlesnake, Crotalus atrox, via snake venomics and combinatorial peptide ligand library approaches.</title>
        <authorList>
            <person name="Calvete J.J."/>
            <person name="Fasoli E."/>
            <person name="Sanz L."/>
            <person name="Boschetti E."/>
            <person name="Righetti P.G."/>
        </authorList>
    </citation>
    <scope>PROTEIN SEQUENCE</scope>
    <scope>MASS SPECTROMETRY</scope>
    <scope>PYROGLUTAMATE FORMATION AT GLN-1</scope>
    <source>
        <tissue>Venom</tissue>
    </source>
</reference>
<protein>
    <recommendedName>
        <fullName>Bradykinin-potentiating peptide POL-236</fullName>
        <shortName>BPP POL-236</shortName>
    </recommendedName>
</protein>
<organism>
    <name type="scientific">Crotalus atrox</name>
    <name type="common">Western diamondback rattlesnake</name>
    <dbReference type="NCBI Taxonomy" id="8730"/>
    <lineage>
        <taxon>Eukaryota</taxon>
        <taxon>Metazoa</taxon>
        <taxon>Chordata</taxon>
        <taxon>Craniata</taxon>
        <taxon>Vertebrata</taxon>
        <taxon>Euteleostomi</taxon>
        <taxon>Lepidosauria</taxon>
        <taxon>Squamata</taxon>
        <taxon>Bifurcata</taxon>
        <taxon>Unidentata</taxon>
        <taxon>Episquamata</taxon>
        <taxon>Toxicofera</taxon>
        <taxon>Serpentes</taxon>
        <taxon>Colubroidea</taxon>
        <taxon>Viperidae</taxon>
        <taxon>Crotalinae</taxon>
        <taxon>Crotalus</taxon>
    </lineage>
</organism>